<reference key="1">
    <citation type="journal article" date="2006" name="Theor. Appl. Genet.">
        <title>Complete chloroplast genome sequences of Solanum bulbocastanum, Solanum lycopersicum and comparative analyses with other Solanaceae genomes.</title>
        <authorList>
            <person name="Daniell H."/>
            <person name="Lee S.-B."/>
            <person name="Grevich J."/>
            <person name="Saski C."/>
            <person name="Quesada-Vargas T."/>
            <person name="Guda C."/>
            <person name="Tomkins J."/>
            <person name="Jansen R.K."/>
        </authorList>
    </citation>
    <scope>NUCLEOTIDE SEQUENCE [LARGE SCALE GENOMIC DNA]</scope>
    <source>
        <strain>cv. PT29</strain>
    </source>
</reference>
<comment type="function">
    <text evidence="1">DNA-dependent RNA polymerase catalyzes the transcription of DNA into RNA using the four ribonucleoside triphosphates as substrates.</text>
</comment>
<comment type="catalytic activity">
    <reaction evidence="1">
        <text>RNA(n) + a ribonucleoside 5'-triphosphate = RNA(n+1) + diphosphate</text>
        <dbReference type="Rhea" id="RHEA:21248"/>
        <dbReference type="Rhea" id="RHEA-COMP:14527"/>
        <dbReference type="Rhea" id="RHEA-COMP:17342"/>
        <dbReference type="ChEBI" id="CHEBI:33019"/>
        <dbReference type="ChEBI" id="CHEBI:61557"/>
        <dbReference type="ChEBI" id="CHEBI:140395"/>
        <dbReference type="EC" id="2.7.7.6"/>
    </reaction>
</comment>
<comment type="cofactor">
    <cofactor evidence="1">
        <name>Zn(2+)</name>
        <dbReference type="ChEBI" id="CHEBI:29105"/>
    </cofactor>
    <text evidence="1">Binds 1 Zn(2+) ion per subunit.</text>
</comment>
<comment type="subunit">
    <text evidence="1">In plastids the minimal PEP RNA polymerase catalytic core is composed of four subunits: alpha, beta, beta', and beta''. When a (nuclear-encoded) sigma factor is associated with the core the holoenzyme is formed, which can initiate transcription.</text>
</comment>
<comment type="subcellular location">
    <subcellularLocation>
        <location evidence="1">Plastid</location>
        <location evidence="1">Chloroplast</location>
    </subcellularLocation>
</comment>
<comment type="similarity">
    <text evidence="1">Belongs to the RNA polymerase beta' chain family. RpoC2 subfamily.</text>
</comment>
<organism>
    <name type="scientific">Solanum bulbocastanum</name>
    <name type="common">Wild potato</name>
    <dbReference type="NCBI Taxonomy" id="147425"/>
    <lineage>
        <taxon>Eukaryota</taxon>
        <taxon>Viridiplantae</taxon>
        <taxon>Streptophyta</taxon>
        <taxon>Embryophyta</taxon>
        <taxon>Tracheophyta</taxon>
        <taxon>Spermatophyta</taxon>
        <taxon>Magnoliopsida</taxon>
        <taxon>eudicotyledons</taxon>
        <taxon>Gunneridae</taxon>
        <taxon>Pentapetalae</taxon>
        <taxon>asterids</taxon>
        <taxon>lamiids</taxon>
        <taxon>Solanales</taxon>
        <taxon>Solanaceae</taxon>
        <taxon>Solanoideae</taxon>
        <taxon>Solaneae</taxon>
        <taxon>Solanum</taxon>
    </lineage>
</organism>
<geneLocation type="chloroplast"/>
<evidence type="ECO:0000255" key="1">
    <source>
        <dbReference type="HAMAP-Rule" id="MF_01324"/>
    </source>
</evidence>
<dbReference type="EC" id="2.7.7.6" evidence="1"/>
<dbReference type="EMBL" id="DQ347958">
    <property type="protein sequence ID" value="ABC56203.1"/>
    <property type="molecule type" value="Genomic_DNA"/>
</dbReference>
<dbReference type="RefSeq" id="YP_538838.1">
    <property type="nucleotide sequence ID" value="NC_007943.1"/>
</dbReference>
<dbReference type="SMR" id="Q2MIJ7"/>
<dbReference type="GeneID" id="3989541"/>
<dbReference type="GO" id="GO:0009507">
    <property type="term" value="C:chloroplast"/>
    <property type="evidence" value="ECO:0007669"/>
    <property type="project" value="UniProtKB-SubCell"/>
</dbReference>
<dbReference type="GO" id="GO:0000428">
    <property type="term" value="C:DNA-directed RNA polymerase complex"/>
    <property type="evidence" value="ECO:0007669"/>
    <property type="project" value="UniProtKB-KW"/>
</dbReference>
<dbReference type="GO" id="GO:0005739">
    <property type="term" value="C:mitochondrion"/>
    <property type="evidence" value="ECO:0007669"/>
    <property type="project" value="GOC"/>
</dbReference>
<dbReference type="GO" id="GO:0003677">
    <property type="term" value="F:DNA binding"/>
    <property type="evidence" value="ECO:0007669"/>
    <property type="project" value="UniProtKB-UniRule"/>
</dbReference>
<dbReference type="GO" id="GO:0003899">
    <property type="term" value="F:DNA-directed RNA polymerase activity"/>
    <property type="evidence" value="ECO:0007669"/>
    <property type="project" value="UniProtKB-UniRule"/>
</dbReference>
<dbReference type="GO" id="GO:0008270">
    <property type="term" value="F:zinc ion binding"/>
    <property type="evidence" value="ECO:0007669"/>
    <property type="project" value="UniProtKB-UniRule"/>
</dbReference>
<dbReference type="GO" id="GO:0006351">
    <property type="term" value="P:DNA-templated transcription"/>
    <property type="evidence" value="ECO:0007669"/>
    <property type="project" value="UniProtKB-UniRule"/>
</dbReference>
<dbReference type="CDD" id="cd02655">
    <property type="entry name" value="RNAP_beta'_C"/>
    <property type="match status" value="1"/>
</dbReference>
<dbReference type="FunFam" id="1.10.132.30:FF:000002">
    <property type="entry name" value="DNA-directed RNA polymerase subunit beta"/>
    <property type="match status" value="1"/>
</dbReference>
<dbReference type="Gene3D" id="1.10.132.30">
    <property type="match status" value="1"/>
</dbReference>
<dbReference type="Gene3D" id="1.10.150.390">
    <property type="match status" value="1"/>
</dbReference>
<dbReference type="Gene3D" id="1.10.1790.20">
    <property type="match status" value="1"/>
</dbReference>
<dbReference type="Gene3D" id="1.10.274.100">
    <property type="entry name" value="RNA polymerase Rpb1, domain 3"/>
    <property type="match status" value="1"/>
</dbReference>
<dbReference type="HAMAP" id="MF_01324">
    <property type="entry name" value="RNApol_bact_RpoC2"/>
    <property type="match status" value="1"/>
</dbReference>
<dbReference type="InterPro" id="IPR012756">
    <property type="entry name" value="DNA-dir_RpoC2_beta_pp"/>
</dbReference>
<dbReference type="InterPro" id="IPR050254">
    <property type="entry name" value="RNA_pol_beta''_euk"/>
</dbReference>
<dbReference type="InterPro" id="IPR042102">
    <property type="entry name" value="RNA_pol_Rpb1_3_sf"/>
</dbReference>
<dbReference type="InterPro" id="IPR007083">
    <property type="entry name" value="RNA_pol_Rpb1_4"/>
</dbReference>
<dbReference type="InterPro" id="IPR007081">
    <property type="entry name" value="RNA_pol_Rpb1_5"/>
</dbReference>
<dbReference type="InterPro" id="IPR038120">
    <property type="entry name" value="Rpb1_funnel_sf"/>
</dbReference>
<dbReference type="NCBIfam" id="TIGR02388">
    <property type="entry name" value="rpoC2_cyan"/>
    <property type="match status" value="1"/>
</dbReference>
<dbReference type="PANTHER" id="PTHR34995">
    <property type="entry name" value="DNA-DIRECTED RNA POLYMERASE SUBUNIT BETA"/>
    <property type="match status" value="1"/>
</dbReference>
<dbReference type="PANTHER" id="PTHR34995:SF1">
    <property type="entry name" value="DNA-DIRECTED RNA POLYMERASE SUBUNIT BETA"/>
    <property type="match status" value="1"/>
</dbReference>
<dbReference type="Pfam" id="PF05000">
    <property type="entry name" value="RNA_pol_Rpb1_4"/>
    <property type="match status" value="1"/>
</dbReference>
<dbReference type="Pfam" id="PF04998">
    <property type="entry name" value="RNA_pol_Rpb1_5"/>
    <property type="match status" value="2"/>
</dbReference>
<dbReference type="SUPFAM" id="SSF64484">
    <property type="entry name" value="beta and beta-prime subunits of DNA dependent RNA-polymerase"/>
    <property type="match status" value="1"/>
</dbReference>
<protein>
    <recommendedName>
        <fullName evidence="1">DNA-directed RNA polymerase subunit beta''</fullName>
        <ecNumber evidence="1">2.7.7.6</ecNumber>
    </recommendedName>
    <alternativeName>
        <fullName evidence="1">PEP</fullName>
    </alternativeName>
    <alternativeName>
        <fullName evidence="1">Plastid-encoded RNA polymerase subunit beta''</fullName>
        <shortName evidence="1">RNA polymerase subunit beta''</shortName>
    </alternativeName>
</protein>
<feature type="chain" id="PRO_0000277201" description="DNA-directed RNA polymerase subunit beta''">
    <location>
        <begin position="1"/>
        <end position="1392"/>
    </location>
</feature>
<feature type="binding site" evidence="1">
    <location>
        <position position="224"/>
    </location>
    <ligand>
        <name>Zn(2+)</name>
        <dbReference type="ChEBI" id="CHEBI:29105"/>
    </ligand>
</feature>
<feature type="binding site" evidence="1">
    <location>
        <position position="295"/>
    </location>
    <ligand>
        <name>Zn(2+)</name>
        <dbReference type="ChEBI" id="CHEBI:29105"/>
    </ligand>
</feature>
<feature type="binding site" evidence="1">
    <location>
        <position position="302"/>
    </location>
    <ligand>
        <name>Zn(2+)</name>
        <dbReference type="ChEBI" id="CHEBI:29105"/>
    </ligand>
</feature>
<feature type="binding site" evidence="1">
    <location>
        <position position="305"/>
    </location>
    <ligand>
        <name>Zn(2+)</name>
        <dbReference type="ChEBI" id="CHEBI:29105"/>
    </ligand>
</feature>
<gene>
    <name evidence="1" type="primary">rpoC2</name>
</gene>
<accession>Q2MIJ7</accession>
<keyword id="KW-0150">Chloroplast</keyword>
<keyword id="KW-0240">DNA-directed RNA polymerase</keyword>
<keyword id="KW-0479">Metal-binding</keyword>
<keyword id="KW-0548">Nucleotidyltransferase</keyword>
<keyword id="KW-0934">Plastid</keyword>
<keyword id="KW-0804">Transcription</keyword>
<keyword id="KW-0808">Transferase</keyword>
<keyword id="KW-0862">Zinc</keyword>
<sequence length="1392" mass="157124">MEVLMAERANLVFHNKAIDGTAMKRLISRLIEHFGMAYTSHILDQVKTLGFQQATATSISLGIDDLLTIPSKGWLVQDAEQQSLILEKHHHYGNVHAVEKLRQSIEIWYATSEYLRQEMNPNFRMTDPFNPVHIMSFSGARGNASQVHQLVGMRGLMSDPQGQMIDLPIQSNLREGLSLTEYIISCYGARKGVVDTAVRTSDAGYLTRRLVEVVQHIVVRRTDCGTARGISVSPRNGIMPERIFSQTLIGRVLADDIYMGSRCIATRNQAIGIGLVNRFITFRAQPISIRTPFTCRSTSWICRLCYGRSPTHGDLVELGEAVGIIAGQSIGEPGTQLTLRTFHTGGVFTGGTAEHVRAPSNGKIKFNEDLVHPTRTRHGHPAFLCSIDLYVTIESEDILHNVNIPPKSLLLVQNDQYVESEQVIAEIRAGISTLNFKEKVRKHIYSDSDGEMHWSTDVYHAPEFTYGNVHLLPKTSHLWILLGGPCRSSLVYLSIHKDQDQMNAHSLSGKPRYTSNLSVTNDQARQKLFSSDFYGQKEDRIPDYSDLNRIICTGQYNLVYSPILHGNSDLLSKRRRNKFIIPLHSIQELENELMPCSGISIEIPVNGIFRRNSILAYFDDPRYRRKSSGIIKYGTIETHSVIKKEDLIEYRGVKEFRPKYQMKVDRFFFIPEEVHILPGSSSIMVRNNSIVGVDTQITLNLRSRVGGLVRVERKKKRIELKIFSGDIHFPGETDKISRHTGVLIPPGTGKRNSKEYKKVKNWIYVQRITPSKKRFFVLVRPVVTYEITDGINLGTLFPPDPLQERDNVQLRIVNYILYGNGKPIRGISDTSIQLVRTCLVLNWNQDKKSSSCEEARASFVEIRTNGLIRHFLRINLVKSPISYIGKRNDPSGSGLLSDNGSDCTNINPFSAIYSYSKAKIQQSLNQPQGTIHTLLNRNKECQSLIILSAANCSRMEPFKDVKYHSVIKESIKKDPLIPIRNSLGPLGTCLPIENFYSSYHLITHNQILVTKYLQLDNLKQTFQVIKLKYYLMDENGKIFNPDPCRNIILNPFNLNWSFLHHNYCAETSKIISLGQFICENVCIAKNGPPLKSGQVILVQVDSIVIRSAKPYLATPGATVHGHYGETLYEGDTLVTFIYEKSRSGDITQGLPKVEQVLEVRSIDSISMNLEKRVESWNKCIPRILGIPWGFLIGAELTIAQSRISLVNKIQQVYRSQGVQIHNRHIEIIVRQITSKVLISEDGMSNVFSPGELIGLLRAERMGRALEEAICYRVVLLGITRASLNTQSFISEASFQETARVLAKAALRGRIDWLKGLKENVVLGGVIPVGTGFKGLVHPSKQHNNIPLETKKTNLFEGEMRDILFHHRKLFDSCLSKKFHDIPEQSFIGFNDS</sequence>
<name>RPOC2_SOLBU</name>
<proteinExistence type="inferred from homology"/>